<organism>
    <name type="scientific">Saccharolobus islandicus (strain M.16.27)</name>
    <name type="common">Sulfolobus islandicus</name>
    <dbReference type="NCBI Taxonomy" id="427318"/>
    <lineage>
        <taxon>Archaea</taxon>
        <taxon>Thermoproteota</taxon>
        <taxon>Thermoprotei</taxon>
        <taxon>Sulfolobales</taxon>
        <taxon>Sulfolobaceae</taxon>
        <taxon>Saccharolobus</taxon>
    </lineage>
</organism>
<sequence>MDKGRCTILNSEELWAQARQLFAGGVNSPVRAAVKPFPFYVERGKGAYIYTVEGNKFIDYVLGYGPLILGHSPESVKRKIIEQLEKGWLFGTPSKLEIELAKKISSHIPSAQKIRFVNSGTEATMAAIRLARGYSKRSKILKFSGNYHGAHDYTLVEAGSAATEYNVTTSDGIPMEIMKTIEICEFNDLDCVDKKLRNEDIAAALLEPIMGNAGVILPEKGFLSGLRELTKSYNSLLIFDEVITGFRIDIGGAQSYYQIYPDITTLGKIIGGGFPIGAVAGKAEIIDNFTPAGRVFNAGTFNANPISMIAGIATIEELEKEYPYNIANKASKTLVEELERLLKIKHTINHIGSMFQVFFGIDKVRNYSDAKRANKEYYIKFHERLLKERVFIPPSQYETIFTSAAHEDDVVNDTIDKLAKVIGELS</sequence>
<comment type="catalytic activity">
    <reaction evidence="1">
        <text>(S)-4-amino-5-oxopentanoate = 5-aminolevulinate</text>
        <dbReference type="Rhea" id="RHEA:14265"/>
        <dbReference type="ChEBI" id="CHEBI:57501"/>
        <dbReference type="ChEBI" id="CHEBI:356416"/>
        <dbReference type="EC" id="5.4.3.8"/>
    </reaction>
</comment>
<comment type="cofactor">
    <cofactor evidence="1">
        <name>pyridoxal 5'-phosphate</name>
        <dbReference type="ChEBI" id="CHEBI:597326"/>
    </cofactor>
</comment>
<comment type="pathway">
    <text evidence="1">Porphyrin-containing compound metabolism; protoporphyrin-IX biosynthesis; 5-aminolevulinate from L-glutamyl-tRNA(Glu): step 2/2.</text>
</comment>
<comment type="subcellular location">
    <subcellularLocation>
        <location evidence="1">Cytoplasm</location>
    </subcellularLocation>
</comment>
<comment type="similarity">
    <text evidence="1">Belongs to the class-III pyridoxal-phosphate-dependent aminotransferase family. HemL subfamily.</text>
</comment>
<feature type="chain" id="PRO_0000382415" description="Glutamate-1-semialdehyde 2,1-aminomutase">
    <location>
        <begin position="1"/>
        <end position="426"/>
    </location>
</feature>
<feature type="modified residue" description="N6-(pyridoxal phosphate)lysine" evidence="1">
    <location>
        <position position="268"/>
    </location>
</feature>
<proteinExistence type="inferred from homology"/>
<accession>C3MZR9</accession>
<evidence type="ECO:0000255" key="1">
    <source>
        <dbReference type="HAMAP-Rule" id="MF_00375"/>
    </source>
</evidence>
<reference key="1">
    <citation type="journal article" date="2009" name="Proc. Natl. Acad. Sci. U.S.A.">
        <title>Biogeography of the Sulfolobus islandicus pan-genome.</title>
        <authorList>
            <person name="Reno M.L."/>
            <person name="Held N.L."/>
            <person name="Fields C.J."/>
            <person name="Burke P.V."/>
            <person name="Whitaker R.J."/>
        </authorList>
    </citation>
    <scope>NUCLEOTIDE SEQUENCE [LARGE SCALE GENOMIC DNA]</scope>
    <source>
        <strain>M.16.27</strain>
    </source>
</reference>
<dbReference type="EC" id="5.4.3.8" evidence="1"/>
<dbReference type="EMBL" id="CP001401">
    <property type="protein sequence ID" value="ACP55901.1"/>
    <property type="molecule type" value="Genomic_DNA"/>
</dbReference>
<dbReference type="RefSeq" id="WP_012711924.1">
    <property type="nucleotide sequence ID" value="NC_012632.1"/>
</dbReference>
<dbReference type="SMR" id="C3MZR9"/>
<dbReference type="GeneID" id="84059307"/>
<dbReference type="KEGG" id="sim:M1627_2031"/>
<dbReference type="HOGENOM" id="CLU_016922_1_5_2"/>
<dbReference type="UniPathway" id="UPA00251">
    <property type="reaction ID" value="UER00317"/>
</dbReference>
<dbReference type="Proteomes" id="UP000002307">
    <property type="component" value="Chromosome"/>
</dbReference>
<dbReference type="GO" id="GO:0005737">
    <property type="term" value="C:cytoplasm"/>
    <property type="evidence" value="ECO:0007669"/>
    <property type="project" value="UniProtKB-SubCell"/>
</dbReference>
<dbReference type="GO" id="GO:0042286">
    <property type="term" value="F:glutamate-1-semialdehyde 2,1-aminomutase activity"/>
    <property type="evidence" value="ECO:0007669"/>
    <property type="project" value="UniProtKB-UniRule"/>
</dbReference>
<dbReference type="GO" id="GO:0030170">
    <property type="term" value="F:pyridoxal phosphate binding"/>
    <property type="evidence" value="ECO:0007669"/>
    <property type="project" value="InterPro"/>
</dbReference>
<dbReference type="GO" id="GO:0008483">
    <property type="term" value="F:transaminase activity"/>
    <property type="evidence" value="ECO:0007669"/>
    <property type="project" value="InterPro"/>
</dbReference>
<dbReference type="GO" id="GO:0006782">
    <property type="term" value="P:protoporphyrinogen IX biosynthetic process"/>
    <property type="evidence" value="ECO:0007669"/>
    <property type="project" value="UniProtKB-UniRule"/>
</dbReference>
<dbReference type="CDD" id="cd00610">
    <property type="entry name" value="OAT_like"/>
    <property type="match status" value="1"/>
</dbReference>
<dbReference type="FunFam" id="3.40.640.10:FF:000021">
    <property type="entry name" value="Glutamate-1-semialdehyde 2,1-aminomutase"/>
    <property type="match status" value="1"/>
</dbReference>
<dbReference type="Gene3D" id="3.90.1150.10">
    <property type="entry name" value="Aspartate Aminotransferase, domain 1"/>
    <property type="match status" value="1"/>
</dbReference>
<dbReference type="Gene3D" id="3.40.640.10">
    <property type="entry name" value="Type I PLP-dependent aspartate aminotransferase-like (Major domain)"/>
    <property type="match status" value="1"/>
</dbReference>
<dbReference type="HAMAP" id="MF_00375">
    <property type="entry name" value="HemL_aminotrans_3"/>
    <property type="match status" value="1"/>
</dbReference>
<dbReference type="InterPro" id="IPR004639">
    <property type="entry name" value="4pyrrol_synth_GluAld_NH2Trfase"/>
</dbReference>
<dbReference type="InterPro" id="IPR005814">
    <property type="entry name" value="Aminotrans_3"/>
</dbReference>
<dbReference type="InterPro" id="IPR049704">
    <property type="entry name" value="Aminotrans_3_PPA_site"/>
</dbReference>
<dbReference type="InterPro" id="IPR015424">
    <property type="entry name" value="PyrdxlP-dep_Trfase"/>
</dbReference>
<dbReference type="InterPro" id="IPR015421">
    <property type="entry name" value="PyrdxlP-dep_Trfase_major"/>
</dbReference>
<dbReference type="InterPro" id="IPR015422">
    <property type="entry name" value="PyrdxlP-dep_Trfase_small"/>
</dbReference>
<dbReference type="NCBIfam" id="TIGR00713">
    <property type="entry name" value="hemL"/>
    <property type="match status" value="1"/>
</dbReference>
<dbReference type="NCBIfam" id="NF000818">
    <property type="entry name" value="PRK00062.1"/>
    <property type="match status" value="1"/>
</dbReference>
<dbReference type="PANTHER" id="PTHR43713">
    <property type="entry name" value="GLUTAMATE-1-SEMIALDEHYDE 2,1-AMINOMUTASE"/>
    <property type="match status" value="1"/>
</dbReference>
<dbReference type="PANTHER" id="PTHR43713:SF3">
    <property type="entry name" value="GLUTAMATE-1-SEMIALDEHYDE 2,1-AMINOMUTASE 1, CHLOROPLASTIC-RELATED"/>
    <property type="match status" value="1"/>
</dbReference>
<dbReference type="Pfam" id="PF00202">
    <property type="entry name" value="Aminotran_3"/>
    <property type="match status" value="1"/>
</dbReference>
<dbReference type="SUPFAM" id="SSF53383">
    <property type="entry name" value="PLP-dependent transferases"/>
    <property type="match status" value="1"/>
</dbReference>
<dbReference type="PROSITE" id="PS00600">
    <property type="entry name" value="AA_TRANSFER_CLASS_3"/>
    <property type="match status" value="1"/>
</dbReference>
<gene>
    <name evidence="1" type="primary">hemL</name>
    <name type="ordered locus">M1627_2031</name>
</gene>
<keyword id="KW-0963">Cytoplasm</keyword>
<keyword id="KW-0413">Isomerase</keyword>
<keyword id="KW-0627">Porphyrin biosynthesis</keyword>
<keyword id="KW-0663">Pyridoxal phosphate</keyword>
<protein>
    <recommendedName>
        <fullName evidence="1">Glutamate-1-semialdehyde 2,1-aminomutase</fullName>
        <shortName evidence="1">GSA</shortName>
        <ecNumber evidence="1">5.4.3.8</ecNumber>
    </recommendedName>
    <alternativeName>
        <fullName evidence="1">Glutamate-1-semialdehyde aminotransferase</fullName>
        <shortName evidence="1">GSA-AT</shortName>
    </alternativeName>
</protein>
<name>GSA_SACI3</name>